<protein>
    <recommendedName>
        <fullName evidence="1">7-carboxy-7-deazaguanine synthase</fullName>
        <shortName evidence="1">CDG synthase</shortName>
        <ecNumber evidence="1">4.3.99.3</ecNumber>
    </recommendedName>
    <alternativeName>
        <fullName evidence="1">Queuosine biosynthesis protein QueE</fullName>
    </alternativeName>
</protein>
<keyword id="KW-0004">4Fe-4S</keyword>
<keyword id="KW-0408">Iron</keyword>
<keyword id="KW-0411">Iron-sulfur</keyword>
<keyword id="KW-0456">Lyase</keyword>
<keyword id="KW-0460">Magnesium</keyword>
<keyword id="KW-0479">Metal-binding</keyword>
<keyword id="KW-0671">Queuosine biosynthesis</keyword>
<keyword id="KW-1185">Reference proteome</keyword>
<keyword id="KW-0949">S-adenosyl-L-methionine</keyword>
<name>QUEE_HAEIN</name>
<proteinExistence type="inferred from homology"/>
<organism>
    <name type="scientific">Haemophilus influenzae (strain ATCC 51907 / DSM 11121 / KW20 / Rd)</name>
    <dbReference type="NCBI Taxonomy" id="71421"/>
    <lineage>
        <taxon>Bacteria</taxon>
        <taxon>Pseudomonadati</taxon>
        <taxon>Pseudomonadota</taxon>
        <taxon>Gammaproteobacteria</taxon>
        <taxon>Pasteurellales</taxon>
        <taxon>Pasteurellaceae</taxon>
        <taxon>Haemophilus</taxon>
    </lineage>
</organism>
<comment type="function">
    <text evidence="1">Catalyzes the complex heterocyclic radical-mediated conversion of 6-carboxy-5,6,7,8-tetrahydropterin (CPH4) to 7-carboxy-7-deazaguanine (CDG), a step common to the biosynthetic pathways of all 7-deazapurine-containing compounds.</text>
</comment>
<comment type="catalytic activity">
    <reaction evidence="1">
        <text>6-carboxy-5,6,7,8-tetrahydropterin + H(+) = 7-carboxy-7-deazaguanine + NH4(+)</text>
        <dbReference type="Rhea" id="RHEA:27974"/>
        <dbReference type="ChEBI" id="CHEBI:15378"/>
        <dbReference type="ChEBI" id="CHEBI:28938"/>
        <dbReference type="ChEBI" id="CHEBI:61032"/>
        <dbReference type="ChEBI" id="CHEBI:61036"/>
        <dbReference type="EC" id="4.3.99.3"/>
    </reaction>
</comment>
<comment type="cofactor">
    <cofactor evidence="1">
        <name>[4Fe-4S] cluster</name>
        <dbReference type="ChEBI" id="CHEBI:49883"/>
    </cofactor>
    <text evidence="1">Binds 1 [4Fe-4S] cluster. The cluster is coordinated with 3 cysteines and an exchangeable S-adenosyl-L-methionine.</text>
</comment>
<comment type="cofactor">
    <cofactor evidence="1">
        <name>S-adenosyl-L-methionine</name>
        <dbReference type="ChEBI" id="CHEBI:59789"/>
    </cofactor>
    <text evidence="1">Binds 1 S-adenosyl-L-methionine per subunit.</text>
</comment>
<comment type="cofactor">
    <cofactor evidence="1">
        <name>Mg(2+)</name>
        <dbReference type="ChEBI" id="CHEBI:18420"/>
    </cofactor>
</comment>
<comment type="pathway">
    <text evidence="1">Purine metabolism; 7-cyano-7-deazaguanine biosynthesis.</text>
</comment>
<comment type="subunit">
    <text evidence="1">Homodimer.</text>
</comment>
<comment type="similarity">
    <text evidence="1">Belongs to the radical SAM superfamily. 7-carboxy-7-deazaguanine synthase family.</text>
</comment>
<evidence type="ECO:0000255" key="1">
    <source>
        <dbReference type="HAMAP-Rule" id="MF_00917"/>
    </source>
</evidence>
<evidence type="ECO:0000255" key="2">
    <source>
        <dbReference type="PROSITE-ProRule" id="PRU01266"/>
    </source>
</evidence>
<accession>P45097</accession>
<feature type="chain" id="PRO_0000169319" description="7-carboxy-7-deazaguanine synthase">
    <location>
        <begin position="1"/>
        <end position="211"/>
    </location>
</feature>
<feature type="domain" description="Radical SAM core" evidence="2">
    <location>
        <begin position="28"/>
        <end position="211"/>
    </location>
</feature>
<feature type="binding site" evidence="1">
    <location>
        <begin position="22"/>
        <end position="24"/>
    </location>
    <ligand>
        <name>substrate</name>
    </ligand>
</feature>
<feature type="binding site" evidence="1">
    <location>
        <position position="37"/>
    </location>
    <ligand>
        <name>substrate</name>
    </ligand>
</feature>
<feature type="binding site" evidence="1">
    <location>
        <position position="41"/>
    </location>
    <ligand>
        <name>[4Fe-4S] cluster</name>
        <dbReference type="ChEBI" id="CHEBI:49883"/>
        <note>4Fe-4S-S-AdoMet</note>
    </ligand>
</feature>
<feature type="binding site" evidence="1">
    <location>
        <position position="45"/>
    </location>
    <ligand>
        <name>[4Fe-4S] cluster</name>
        <dbReference type="ChEBI" id="CHEBI:49883"/>
        <note>4Fe-4S-S-AdoMet</note>
    </ligand>
</feature>
<feature type="binding site" evidence="1">
    <location>
        <position position="48"/>
    </location>
    <ligand>
        <name>[4Fe-4S] cluster</name>
        <dbReference type="ChEBI" id="CHEBI:49883"/>
        <note>4Fe-4S-S-AdoMet</note>
    </ligand>
</feature>
<feature type="binding site" evidence="1">
    <location>
        <position position="50"/>
    </location>
    <ligand>
        <name>Mg(2+)</name>
        <dbReference type="ChEBI" id="CHEBI:18420"/>
    </ligand>
</feature>
<feature type="binding site" evidence="1">
    <location>
        <position position="78"/>
    </location>
    <ligand>
        <name>substrate</name>
    </ligand>
</feature>
<feature type="binding site" evidence="1">
    <location>
        <position position="80"/>
    </location>
    <ligand>
        <name>S-adenosyl-L-methionine</name>
        <dbReference type="ChEBI" id="CHEBI:59789"/>
    </ligand>
</feature>
<feature type="binding site" evidence="1">
    <location>
        <begin position="122"/>
        <end position="124"/>
    </location>
    <ligand>
        <name>S-adenosyl-L-methionine</name>
        <dbReference type="ChEBI" id="CHEBI:59789"/>
    </ligand>
</feature>
<dbReference type="EC" id="4.3.99.3" evidence="1"/>
<dbReference type="EMBL" id="L42023">
    <property type="protein sequence ID" value="AAC22842.1"/>
    <property type="molecule type" value="Genomic_DNA"/>
</dbReference>
<dbReference type="PIR" id="I64188">
    <property type="entry name" value="I64188"/>
</dbReference>
<dbReference type="RefSeq" id="NP_439345.1">
    <property type="nucleotide sequence ID" value="NC_000907.1"/>
</dbReference>
<dbReference type="SMR" id="P45097"/>
<dbReference type="STRING" id="71421.HI_1189"/>
<dbReference type="DNASU" id="950138"/>
<dbReference type="EnsemblBacteria" id="AAC22842">
    <property type="protein sequence ID" value="AAC22842"/>
    <property type="gene ID" value="HI_1189"/>
</dbReference>
<dbReference type="KEGG" id="hin:HI_1189"/>
<dbReference type="PATRIC" id="fig|71421.8.peg.1241"/>
<dbReference type="eggNOG" id="COG0602">
    <property type="taxonomic scope" value="Bacteria"/>
</dbReference>
<dbReference type="HOGENOM" id="CLU_066739_0_0_6"/>
<dbReference type="OrthoDB" id="9792276at2"/>
<dbReference type="PhylomeDB" id="P45097"/>
<dbReference type="BioCyc" id="HINF71421:G1GJ1-1220-MONOMER"/>
<dbReference type="UniPathway" id="UPA00391"/>
<dbReference type="Proteomes" id="UP000000579">
    <property type="component" value="Chromosome"/>
</dbReference>
<dbReference type="GO" id="GO:0051539">
    <property type="term" value="F:4 iron, 4 sulfur cluster binding"/>
    <property type="evidence" value="ECO:0007669"/>
    <property type="project" value="UniProtKB-UniRule"/>
</dbReference>
<dbReference type="GO" id="GO:0016840">
    <property type="term" value="F:carbon-nitrogen lyase activity"/>
    <property type="evidence" value="ECO:0007669"/>
    <property type="project" value="UniProtKB-UniRule"/>
</dbReference>
<dbReference type="GO" id="GO:0000287">
    <property type="term" value="F:magnesium ion binding"/>
    <property type="evidence" value="ECO:0007669"/>
    <property type="project" value="UniProtKB-UniRule"/>
</dbReference>
<dbReference type="GO" id="GO:1904047">
    <property type="term" value="F:S-adenosyl-L-methionine binding"/>
    <property type="evidence" value="ECO:0007669"/>
    <property type="project" value="UniProtKB-UniRule"/>
</dbReference>
<dbReference type="GO" id="GO:0008616">
    <property type="term" value="P:queuosine biosynthetic process"/>
    <property type="evidence" value="ECO:0007669"/>
    <property type="project" value="UniProtKB-UniRule"/>
</dbReference>
<dbReference type="CDD" id="cd01335">
    <property type="entry name" value="Radical_SAM"/>
    <property type="match status" value="1"/>
</dbReference>
<dbReference type="Gene3D" id="3.20.20.70">
    <property type="entry name" value="Aldolase class I"/>
    <property type="match status" value="1"/>
</dbReference>
<dbReference type="HAMAP" id="MF_00917">
    <property type="entry name" value="QueE"/>
    <property type="match status" value="1"/>
</dbReference>
<dbReference type="InterPro" id="IPR024924">
    <property type="entry name" value="7-CO-7-deazaguanine_synth-like"/>
</dbReference>
<dbReference type="InterPro" id="IPR013785">
    <property type="entry name" value="Aldolase_TIM"/>
</dbReference>
<dbReference type="InterPro" id="IPR007197">
    <property type="entry name" value="rSAM"/>
</dbReference>
<dbReference type="PANTHER" id="PTHR42836">
    <property type="entry name" value="7-CARBOXY-7-DEAZAGUANINE SYNTHASE"/>
    <property type="match status" value="1"/>
</dbReference>
<dbReference type="PANTHER" id="PTHR42836:SF1">
    <property type="entry name" value="7-CARBOXY-7-DEAZAGUANINE SYNTHASE"/>
    <property type="match status" value="1"/>
</dbReference>
<dbReference type="Pfam" id="PF04055">
    <property type="entry name" value="Radical_SAM"/>
    <property type="match status" value="1"/>
</dbReference>
<dbReference type="PIRSF" id="PIRSF000370">
    <property type="entry name" value="QueE"/>
    <property type="match status" value="1"/>
</dbReference>
<dbReference type="SFLD" id="SFLDS00029">
    <property type="entry name" value="Radical_SAM"/>
    <property type="match status" value="1"/>
</dbReference>
<dbReference type="SUPFAM" id="SSF102114">
    <property type="entry name" value="Radical SAM enzymes"/>
    <property type="match status" value="1"/>
</dbReference>
<dbReference type="PROSITE" id="PS51918">
    <property type="entry name" value="RADICAL_SAM"/>
    <property type="match status" value="1"/>
</dbReference>
<sequence length="211" mass="24337">MLMEKYHDFEPNFNIVEIFESLQGEGFNTGMPSVFVRFGKCNLDCPWCDTPYNNFKRWSVSQILEKVRSFSSKNIIITGGEPTIVPKIEYLLEQFKSDGYFLAIETNGLKAIPAQIDYIATSPKSLYAHKYEKRCIPFANEVRIVMDSNMPSFCELIEQKIKAKNYYLSPCEIDGKMNLLETITLLGQLNQRSNKPKWQLSLQTHKLIGIE</sequence>
<reference key="1">
    <citation type="journal article" date="1995" name="Science">
        <title>Whole-genome random sequencing and assembly of Haemophilus influenzae Rd.</title>
        <authorList>
            <person name="Fleischmann R.D."/>
            <person name="Adams M.D."/>
            <person name="White O."/>
            <person name="Clayton R.A."/>
            <person name="Kirkness E.F."/>
            <person name="Kerlavage A.R."/>
            <person name="Bult C.J."/>
            <person name="Tomb J.-F."/>
            <person name="Dougherty B.A."/>
            <person name="Merrick J.M."/>
            <person name="McKenney K."/>
            <person name="Sutton G.G."/>
            <person name="FitzHugh W."/>
            <person name="Fields C.A."/>
            <person name="Gocayne J.D."/>
            <person name="Scott J.D."/>
            <person name="Shirley R."/>
            <person name="Liu L.-I."/>
            <person name="Glodek A."/>
            <person name="Kelley J.M."/>
            <person name="Weidman J.F."/>
            <person name="Phillips C.A."/>
            <person name="Spriggs T."/>
            <person name="Hedblom E."/>
            <person name="Cotton M.D."/>
            <person name="Utterback T.R."/>
            <person name="Hanna M.C."/>
            <person name="Nguyen D.T."/>
            <person name="Saudek D.M."/>
            <person name="Brandon R.C."/>
            <person name="Fine L.D."/>
            <person name="Fritchman J.L."/>
            <person name="Fuhrmann J.L."/>
            <person name="Geoghagen N.S.M."/>
            <person name="Gnehm C.L."/>
            <person name="McDonald L.A."/>
            <person name="Small K.V."/>
            <person name="Fraser C.M."/>
            <person name="Smith H.O."/>
            <person name="Venter J.C."/>
        </authorList>
    </citation>
    <scope>NUCLEOTIDE SEQUENCE [LARGE SCALE GENOMIC DNA]</scope>
    <source>
        <strain>ATCC 51907 / DSM 11121 / KW20 / Rd</strain>
    </source>
</reference>
<gene>
    <name evidence="1" type="primary">queE</name>
    <name type="ordered locus">HI_1189</name>
</gene>